<proteinExistence type="inferred from homology"/>
<reference key="1">
    <citation type="journal article" date="2003" name="DNA Res.">
        <title>Complete genome structure of Gloeobacter violaceus PCC 7421, a cyanobacterium that lacks thylakoids.</title>
        <authorList>
            <person name="Nakamura Y."/>
            <person name="Kaneko T."/>
            <person name="Sato S."/>
            <person name="Mimuro M."/>
            <person name="Miyashita H."/>
            <person name="Tsuchiya T."/>
            <person name="Sasamoto S."/>
            <person name="Watanabe A."/>
            <person name="Kawashima K."/>
            <person name="Kishida Y."/>
            <person name="Kiyokawa C."/>
            <person name="Kohara M."/>
            <person name="Matsumoto M."/>
            <person name="Matsuno A."/>
            <person name="Nakazaki N."/>
            <person name="Shimpo S."/>
            <person name="Takeuchi C."/>
            <person name="Yamada M."/>
            <person name="Tabata S."/>
        </authorList>
    </citation>
    <scope>NUCLEOTIDE SEQUENCE [LARGE SCALE GENOMIC DNA]</scope>
    <source>
        <strain>ATCC 29082 / PCC 7421</strain>
    </source>
</reference>
<name>HIS8_GLOVI</name>
<protein>
    <recommendedName>
        <fullName evidence="1">Histidinol-phosphate aminotransferase</fullName>
        <ecNumber evidence="1">2.6.1.9</ecNumber>
    </recommendedName>
    <alternativeName>
        <fullName evidence="1">Imidazole acetol-phosphate transaminase</fullName>
    </alternativeName>
</protein>
<accession>Q7NL03</accession>
<comment type="catalytic activity">
    <reaction evidence="1">
        <text>L-histidinol phosphate + 2-oxoglutarate = 3-(imidazol-4-yl)-2-oxopropyl phosphate + L-glutamate</text>
        <dbReference type="Rhea" id="RHEA:23744"/>
        <dbReference type="ChEBI" id="CHEBI:16810"/>
        <dbReference type="ChEBI" id="CHEBI:29985"/>
        <dbReference type="ChEBI" id="CHEBI:57766"/>
        <dbReference type="ChEBI" id="CHEBI:57980"/>
        <dbReference type="EC" id="2.6.1.9"/>
    </reaction>
</comment>
<comment type="cofactor">
    <cofactor evidence="1">
        <name>pyridoxal 5'-phosphate</name>
        <dbReference type="ChEBI" id="CHEBI:597326"/>
    </cofactor>
</comment>
<comment type="pathway">
    <text evidence="1">Amino-acid biosynthesis; L-histidine biosynthesis; L-histidine from 5-phospho-alpha-D-ribose 1-diphosphate: step 7/9.</text>
</comment>
<comment type="subunit">
    <text evidence="1">Homodimer.</text>
</comment>
<comment type="similarity">
    <text evidence="1">Belongs to the class-II pyridoxal-phosphate-dependent aminotransferase family. Histidinol-phosphate aminotransferase subfamily.</text>
</comment>
<evidence type="ECO:0000255" key="1">
    <source>
        <dbReference type="HAMAP-Rule" id="MF_01023"/>
    </source>
</evidence>
<gene>
    <name evidence="1" type="primary">hisC</name>
    <name type="ordered locus">gll1323</name>
</gene>
<sequence length="353" mass="38753">MMQPYLRPDLDRLQAYHAPHFPEADKLDANELPHDLPEWLKNKLAFLLEQGVRTNRYPEGDPLALKAAIAEYCGVTSEMVCVGNGSDELIRSLITATCLGGRGTVASAEPTFSMYRILAETLAVPYIGVARTANYGVDADVLEAAVGANGVRVLFLANPNSPTGNLLSDEIIERLGSLPVLVVLDEAYYEFSRFSAVPLLWERPNLVILRTFSKAFRLANFRVGYALANPEIAAVLEKVRLPYNLPGLSQLAAFAALEHRDVLLAAIPEILAERRRIERFLADFEQLELFPSDANFLFVRPRIADPEAVRVALAGRGSLVRGAAGGLRVTVGTPEQNDRLIANVAALFTPEMR</sequence>
<keyword id="KW-0028">Amino-acid biosynthesis</keyword>
<keyword id="KW-0032">Aminotransferase</keyword>
<keyword id="KW-0368">Histidine biosynthesis</keyword>
<keyword id="KW-0663">Pyridoxal phosphate</keyword>
<keyword id="KW-1185">Reference proteome</keyword>
<keyword id="KW-0808">Transferase</keyword>
<feature type="chain" id="PRO_0000153365" description="Histidinol-phosphate aminotransferase">
    <location>
        <begin position="1"/>
        <end position="353"/>
    </location>
</feature>
<feature type="modified residue" description="N6-(pyridoxal phosphate)lysine" evidence="1">
    <location>
        <position position="214"/>
    </location>
</feature>
<organism>
    <name type="scientific">Gloeobacter violaceus (strain ATCC 29082 / PCC 7421)</name>
    <dbReference type="NCBI Taxonomy" id="251221"/>
    <lineage>
        <taxon>Bacteria</taxon>
        <taxon>Bacillati</taxon>
        <taxon>Cyanobacteriota</taxon>
        <taxon>Cyanophyceae</taxon>
        <taxon>Gloeobacterales</taxon>
        <taxon>Gloeobacteraceae</taxon>
        <taxon>Gloeobacter</taxon>
    </lineage>
</organism>
<dbReference type="EC" id="2.6.1.9" evidence="1"/>
<dbReference type="EMBL" id="BA000045">
    <property type="protein sequence ID" value="BAC89264.1"/>
    <property type="molecule type" value="Genomic_DNA"/>
</dbReference>
<dbReference type="RefSeq" id="NP_924269.1">
    <property type="nucleotide sequence ID" value="NC_005125.1"/>
</dbReference>
<dbReference type="SMR" id="Q7NL03"/>
<dbReference type="FunCoup" id="Q7NL03">
    <property type="interactions" value="138"/>
</dbReference>
<dbReference type="STRING" id="251221.gene:10758806"/>
<dbReference type="EnsemblBacteria" id="BAC89264">
    <property type="protein sequence ID" value="BAC89264"/>
    <property type="gene ID" value="BAC89264"/>
</dbReference>
<dbReference type="KEGG" id="gvi:gll1323"/>
<dbReference type="PATRIC" id="fig|251221.4.peg.1350"/>
<dbReference type="eggNOG" id="COG0079">
    <property type="taxonomic scope" value="Bacteria"/>
</dbReference>
<dbReference type="HOGENOM" id="CLU_017584_3_1_3"/>
<dbReference type="InParanoid" id="Q7NL03"/>
<dbReference type="OrthoDB" id="9813612at2"/>
<dbReference type="UniPathway" id="UPA00031">
    <property type="reaction ID" value="UER00012"/>
</dbReference>
<dbReference type="Proteomes" id="UP000000557">
    <property type="component" value="Chromosome"/>
</dbReference>
<dbReference type="GO" id="GO:0004400">
    <property type="term" value="F:histidinol-phosphate transaminase activity"/>
    <property type="evidence" value="ECO:0007669"/>
    <property type="project" value="UniProtKB-UniRule"/>
</dbReference>
<dbReference type="GO" id="GO:0030170">
    <property type="term" value="F:pyridoxal phosphate binding"/>
    <property type="evidence" value="ECO:0007669"/>
    <property type="project" value="InterPro"/>
</dbReference>
<dbReference type="GO" id="GO:0000105">
    <property type="term" value="P:L-histidine biosynthetic process"/>
    <property type="evidence" value="ECO:0007669"/>
    <property type="project" value="UniProtKB-UniRule"/>
</dbReference>
<dbReference type="CDD" id="cd00609">
    <property type="entry name" value="AAT_like"/>
    <property type="match status" value="1"/>
</dbReference>
<dbReference type="Gene3D" id="3.90.1150.10">
    <property type="entry name" value="Aspartate Aminotransferase, domain 1"/>
    <property type="match status" value="1"/>
</dbReference>
<dbReference type="Gene3D" id="3.40.640.10">
    <property type="entry name" value="Type I PLP-dependent aspartate aminotransferase-like (Major domain)"/>
    <property type="match status" value="1"/>
</dbReference>
<dbReference type="HAMAP" id="MF_01023">
    <property type="entry name" value="HisC_aminotrans_2"/>
    <property type="match status" value="1"/>
</dbReference>
<dbReference type="InterPro" id="IPR004839">
    <property type="entry name" value="Aminotransferase_I/II_large"/>
</dbReference>
<dbReference type="InterPro" id="IPR005861">
    <property type="entry name" value="HisP_aminotrans"/>
</dbReference>
<dbReference type="InterPro" id="IPR050106">
    <property type="entry name" value="HistidinolP_aminotransfase"/>
</dbReference>
<dbReference type="InterPro" id="IPR015424">
    <property type="entry name" value="PyrdxlP-dep_Trfase"/>
</dbReference>
<dbReference type="InterPro" id="IPR015421">
    <property type="entry name" value="PyrdxlP-dep_Trfase_major"/>
</dbReference>
<dbReference type="InterPro" id="IPR015422">
    <property type="entry name" value="PyrdxlP-dep_Trfase_small"/>
</dbReference>
<dbReference type="NCBIfam" id="TIGR01141">
    <property type="entry name" value="hisC"/>
    <property type="match status" value="1"/>
</dbReference>
<dbReference type="NCBIfam" id="NF002726">
    <property type="entry name" value="PRK02610.1"/>
    <property type="match status" value="1"/>
</dbReference>
<dbReference type="PANTHER" id="PTHR43643:SF6">
    <property type="entry name" value="HISTIDINOL-PHOSPHATE AMINOTRANSFERASE"/>
    <property type="match status" value="1"/>
</dbReference>
<dbReference type="PANTHER" id="PTHR43643">
    <property type="entry name" value="HISTIDINOL-PHOSPHATE AMINOTRANSFERASE 2"/>
    <property type="match status" value="1"/>
</dbReference>
<dbReference type="Pfam" id="PF00155">
    <property type="entry name" value="Aminotran_1_2"/>
    <property type="match status" value="1"/>
</dbReference>
<dbReference type="SUPFAM" id="SSF53383">
    <property type="entry name" value="PLP-dependent transferases"/>
    <property type="match status" value="1"/>
</dbReference>